<keyword id="KW-0903">Direct protein sequencing</keyword>
<keyword id="KW-1015">Disulfide bond</keyword>
<keyword id="KW-0872">Ion channel impairing toxin</keyword>
<keyword id="KW-0528">Neurotoxin</keyword>
<keyword id="KW-0964">Secreted</keyword>
<keyword id="KW-0800">Toxin</keyword>
<keyword id="KW-0738">Voltage-gated sodium channel impairing toxin</keyword>
<organism>
    <name type="scientific">Leiurus quinquestriatus quinquestriatus</name>
    <name type="common">Egyptian scorpion</name>
    <name type="synonym">Deathstalker scorpion</name>
    <dbReference type="NCBI Taxonomy" id="6885"/>
    <lineage>
        <taxon>Eukaryota</taxon>
        <taxon>Metazoa</taxon>
        <taxon>Ecdysozoa</taxon>
        <taxon>Arthropoda</taxon>
        <taxon>Chelicerata</taxon>
        <taxon>Arachnida</taxon>
        <taxon>Scorpiones</taxon>
        <taxon>Buthida</taxon>
        <taxon>Buthoidea</taxon>
        <taxon>Buthidae</taxon>
        <taxon>Leiurus</taxon>
    </lineage>
</organism>
<protein>
    <recommendedName>
        <fullName>Beta-insect excitatory toxin LqqIT1</fullName>
        <shortName>Insect toxin 1</shortName>
        <shortName>LqqIT1'</shortName>
    </recommendedName>
</protein>
<accession>P19856</accession>
<comment type="function">
    <text evidence="3">Excitatory insect beta-toxins induce a spastic paralysis. They bind voltage-independently at site-4 of sodium channels (Nav) and shift the voltage of activation toward more negative potentials thereby affecting sodium channel activation and promoting spontaneous and repetitive firing. In vivo, this toxin induces a fast excitatory contraction paralysis on fly larvae (PubMed:2311768). It is active only on insects (PubMed:2311768).</text>
</comment>
<comment type="subcellular location">
    <subcellularLocation>
        <location evidence="3">Secreted</location>
    </subcellularLocation>
</comment>
<comment type="tissue specificity">
    <text evidence="5">Expressed by the venom gland.</text>
</comment>
<comment type="domain">
    <text evidence="4">Has the structural arrangement of an alpha-helix connected to antiparallel beta-sheets by disulfide bonds (CS-alpha/beta).</text>
</comment>
<comment type="similarity">
    <text evidence="4">Belongs to the long (4 C-C) scorpion toxin superfamily. Sodium channel inhibitor family. Beta subfamily.</text>
</comment>
<dbReference type="PIR" id="S08267">
    <property type="entry name" value="S08267"/>
</dbReference>
<dbReference type="SMR" id="P19856"/>
<dbReference type="GO" id="GO:0005576">
    <property type="term" value="C:extracellular region"/>
    <property type="evidence" value="ECO:0007669"/>
    <property type="project" value="UniProtKB-SubCell"/>
</dbReference>
<dbReference type="GO" id="GO:0019871">
    <property type="term" value="F:sodium channel inhibitor activity"/>
    <property type="evidence" value="ECO:0007669"/>
    <property type="project" value="InterPro"/>
</dbReference>
<dbReference type="GO" id="GO:0090729">
    <property type="term" value="F:toxin activity"/>
    <property type="evidence" value="ECO:0007669"/>
    <property type="project" value="UniProtKB-KW"/>
</dbReference>
<dbReference type="GO" id="GO:0006952">
    <property type="term" value="P:defense response"/>
    <property type="evidence" value="ECO:0007669"/>
    <property type="project" value="InterPro"/>
</dbReference>
<dbReference type="CDD" id="cd23106">
    <property type="entry name" value="neurotoxins_LC_scorpion"/>
    <property type="match status" value="1"/>
</dbReference>
<dbReference type="Gene3D" id="3.30.30.10">
    <property type="entry name" value="Knottin, scorpion toxin-like"/>
    <property type="match status" value="1"/>
</dbReference>
<dbReference type="InterPro" id="IPR044062">
    <property type="entry name" value="LCN-type_CS_alpha_beta_dom"/>
</dbReference>
<dbReference type="InterPro" id="IPR003614">
    <property type="entry name" value="Scorpion_toxin-like"/>
</dbReference>
<dbReference type="InterPro" id="IPR036574">
    <property type="entry name" value="Scorpion_toxin-like_sf"/>
</dbReference>
<dbReference type="InterPro" id="IPR002061">
    <property type="entry name" value="Scorpion_toxinL/defensin"/>
</dbReference>
<dbReference type="Pfam" id="PF00537">
    <property type="entry name" value="Toxin_3"/>
    <property type="match status" value="1"/>
</dbReference>
<dbReference type="SMART" id="SM00505">
    <property type="entry name" value="Knot1"/>
    <property type="match status" value="1"/>
</dbReference>
<dbReference type="SUPFAM" id="SSF57095">
    <property type="entry name" value="Scorpion toxin-like"/>
    <property type="match status" value="1"/>
</dbReference>
<dbReference type="PROSITE" id="PS51863">
    <property type="entry name" value="LCN_CSAB"/>
    <property type="match status" value="1"/>
</dbReference>
<name>SIX1_LEIQU</name>
<proteinExistence type="evidence at protein level"/>
<feature type="chain" id="PRO_0000066711" description="Beta-insect excitatory toxin LqqIT1" evidence="3">
    <location>
        <begin position="1"/>
        <end position="70"/>
    </location>
</feature>
<feature type="domain" description="LCN-type CS-alpha/beta" evidence="2">
    <location>
        <begin position="2"/>
        <end position="65"/>
    </location>
</feature>
<feature type="disulfide bond" evidence="1">
    <location>
        <begin position="16"/>
        <end position="37"/>
    </location>
</feature>
<feature type="disulfide bond" evidence="1">
    <location>
        <begin position="22"/>
        <end position="42"/>
    </location>
</feature>
<feature type="disulfide bond" evidence="1">
    <location>
        <begin position="26"/>
        <end position="44"/>
    </location>
</feature>
<feature type="disulfide bond" evidence="1">
    <location>
        <begin position="38"/>
        <end position="64"/>
    </location>
</feature>
<feature type="sequence variant" description="In LqqIT1'.">
    <original>D</original>
    <variation>E</variation>
    <location>
        <position position="33"/>
    </location>
</feature>
<evidence type="ECO:0000250" key="1">
    <source>
        <dbReference type="UniProtKB" id="P56637"/>
    </source>
</evidence>
<evidence type="ECO:0000255" key="2">
    <source>
        <dbReference type="PROSITE-ProRule" id="PRU01210"/>
    </source>
</evidence>
<evidence type="ECO:0000269" key="3">
    <source>
    </source>
</evidence>
<evidence type="ECO:0000305" key="4"/>
<evidence type="ECO:0000305" key="5">
    <source>
    </source>
</evidence>
<reference key="1">
    <citation type="journal article" date="1990" name="FEBS Lett.">
        <title>Primary structure of scorpion anti-insect toxins isolated from the venom of Leiurus quinquestriatus quinquestriatus.</title>
        <authorList>
            <person name="Kopeyan C."/>
            <person name="Mansuelle P."/>
            <person name="Sampieri F."/>
            <person name="Brando T."/>
            <person name="Bahraoui E.M."/>
            <person name="Rochat H."/>
            <person name="Granier C."/>
        </authorList>
    </citation>
    <scope>PROTEIN SEQUENCE</scope>
    <scope>FUNCTION</scope>
    <scope>SUBCELLULAR LOCATION</scope>
    <scope>BIOASSAY</scope>
    <source>
        <tissue>Venom</tissue>
    </source>
</reference>
<sequence>KKNGYAVDSSGKAPECLLSNYCYNECTKVHYADKGYCCLLSCYCVGLSDDKKVLEISDARKKYCDFVTIN</sequence>